<evidence type="ECO:0000255" key="1">
    <source>
        <dbReference type="HAMAP-Rule" id="MF_02128"/>
    </source>
</evidence>
<evidence type="ECO:0000305" key="2"/>
<reference key="1">
    <citation type="journal article" date="1997" name="Microbiology">
        <title>Nucleotide sequence and analysis of the phoB-rrnE-groESL region of the Bacillus subtilis chromosome.</title>
        <authorList>
            <person name="Sadaie Y."/>
            <person name="Yata K."/>
            <person name="Fujita M."/>
            <person name="Sagai H."/>
            <person name="Itaya M."/>
            <person name="Kasahara Y."/>
            <person name="Ogasawara N."/>
        </authorList>
    </citation>
    <scope>NUCLEOTIDE SEQUENCE [GENOMIC DNA]</scope>
    <source>
        <strain>168 / JH642</strain>
    </source>
</reference>
<reference key="2">
    <citation type="journal article" date="1997" name="Nature">
        <title>The complete genome sequence of the Gram-positive bacterium Bacillus subtilis.</title>
        <authorList>
            <person name="Kunst F."/>
            <person name="Ogasawara N."/>
            <person name="Moszer I."/>
            <person name="Albertini A.M."/>
            <person name="Alloni G."/>
            <person name="Azevedo V."/>
            <person name="Bertero M.G."/>
            <person name="Bessieres P."/>
            <person name="Bolotin A."/>
            <person name="Borchert S."/>
            <person name="Borriss R."/>
            <person name="Boursier L."/>
            <person name="Brans A."/>
            <person name="Braun M."/>
            <person name="Brignell S.C."/>
            <person name="Bron S."/>
            <person name="Brouillet S."/>
            <person name="Bruschi C.V."/>
            <person name="Caldwell B."/>
            <person name="Capuano V."/>
            <person name="Carter N.M."/>
            <person name="Choi S.-K."/>
            <person name="Codani J.-J."/>
            <person name="Connerton I.F."/>
            <person name="Cummings N.J."/>
            <person name="Daniel R.A."/>
            <person name="Denizot F."/>
            <person name="Devine K.M."/>
            <person name="Duesterhoeft A."/>
            <person name="Ehrlich S.D."/>
            <person name="Emmerson P.T."/>
            <person name="Entian K.-D."/>
            <person name="Errington J."/>
            <person name="Fabret C."/>
            <person name="Ferrari E."/>
            <person name="Foulger D."/>
            <person name="Fritz C."/>
            <person name="Fujita M."/>
            <person name="Fujita Y."/>
            <person name="Fuma S."/>
            <person name="Galizzi A."/>
            <person name="Galleron N."/>
            <person name="Ghim S.-Y."/>
            <person name="Glaser P."/>
            <person name="Goffeau A."/>
            <person name="Golightly E.J."/>
            <person name="Grandi G."/>
            <person name="Guiseppi G."/>
            <person name="Guy B.J."/>
            <person name="Haga K."/>
            <person name="Haiech J."/>
            <person name="Harwood C.R."/>
            <person name="Henaut A."/>
            <person name="Hilbert H."/>
            <person name="Holsappel S."/>
            <person name="Hosono S."/>
            <person name="Hullo M.-F."/>
            <person name="Itaya M."/>
            <person name="Jones L.-M."/>
            <person name="Joris B."/>
            <person name="Karamata D."/>
            <person name="Kasahara Y."/>
            <person name="Klaerr-Blanchard M."/>
            <person name="Klein C."/>
            <person name="Kobayashi Y."/>
            <person name="Koetter P."/>
            <person name="Koningstein G."/>
            <person name="Krogh S."/>
            <person name="Kumano M."/>
            <person name="Kurita K."/>
            <person name="Lapidus A."/>
            <person name="Lardinois S."/>
            <person name="Lauber J."/>
            <person name="Lazarevic V."/>
            <person name="Lee S.-M."/>
            <person name="Levine A."/>
            <person name="Liu H."/>
            <person name="Masuda S."/>
            <person name="Mauel C."/>
            <person name="Medigue C."/>
            <person name="Medina N."/>
            <person name="Mellado R.P."/>
            <person name="Mizuno M."/>
            <person name="Moestl D."/>
            <person name="Nakai S."/>
            <person name="Noback M."/>
            <person name="Noone D."/>
            <person name="O'Reilly M."/>
            <person name="Ogawa K."/>
            <person name="Ogiwara A."/>
            <person name="Oudega B."/>
            <person name="Park S.-H."/>
            <person name="Parro V."/>
            <person name="Pohl T.M."/>
            <person name="Portetelle D."/>
            <person name="Porwollik S."/>
            <person name="Prescott A.M."/>
            <person name="Presecan E."/>
            <person name="Pujic P."/>
            <person name="Purnelle B."/>
            <person name="Rapoport G."/>
            <person name="Rey M."/>
            <person name="Reynolds S."/>
            <person name="Rieger M."/>
            <person name="Rivolta C."/>
            <person name="Rocha E."/>
            <person name="Roche B."/>
            <person name="Rose M."/>
            <person name="Sadaie Y."/>
            <person name="Sato T."/>
            <person name="Scanlan E."/>
            <person name="Schleich S."/>
            <person name="Schroeter R."/>
            <person name="Scoffone F."/>
            <person name="Sekiguchi J."/>
            <person name="Sekowska A."/>
            <person name="Seror S.J."/>
            <person name="Serror P."/>
            <person name="Shin B.-S."/>
            <person name="Soldo B."/>
            <person name="Sorokin A."/>
            <person name="Tacconi E."/>
            <person name="Takagi T."/>
            <person name="Takahashi H."/>
            <person name="Takemaru K."/>
            <person name="Takeuchi M."/>
            <person name="Tamakoshi A."/>
            <person name="Tanaka T."/>
            <person name="Terpstra P."/>
            <person name="Tognoni A."/>
            <person name="Tosato V."/>
            <person name="Uchiyama S."/>
            <person name="Vandenbol M."/>
            <person name="Vannier F."/>
            <person name="Vassarotti A."/>
            <person name="Viari A."/>
            <person name="Wambutt R."/>
            <person name="Wedler E."/>
            <person name="Wedler H."/>
            <person name="Weitzenegger T."/>
            <person name="Winters P."/>
            <person name="Wipat A."/>
            <person name="Yamamoto H."/>
            <person name="Yamane K."/>
            <person name="Yasumoto K."/>
            <person name="Yata K."/>
            <person name="Yoshida K."/>
            <person name="Yoshikawa H.-F."/>
            <person name="Zumstein E."/>
            <person name="Yoshikawa H."/>
            <person name="Danchin A."/>
        </authorList>
    </citation>
    <scope>NUCLEOTIDE SEQUENCE [LARGE SCALE GENOMIC DNA]</scope>
    <source>
        <strain>168</strain>
    </source>
</reference>
<reference key="3">
    <citation type="journal article" date="1993" name="J. Bacteriol.">
        <title>Two tRNA gene clusters associated with rRNA operons rrnD and rrnE in Bacillus subtilis.</title>
        <authorList>
            <person name="Rudner R."/>
            <person name="Chevrestt A."/>
            <person name="Bucholz S.R."/>
            <person name="Studamire B."/>
            <person name="White A.M."/>
            <person name="Jarvis E.D."/>
        </authorList>
    </citation>
    <scope>NUCLEOTIDE SEQUENCE [GENOMIC DNA] OF 1-166</scope>
</reference>
<feature type="chain" id="PRO_0000096191" description="Thiamine-monophosphate kinase">
    <location>
        <begin position="1"/>
        <end position="325"/>
    </location>
</feature>
<feature type="binding site" evidence="1">
    <location>
        <position position="27"/>
    </location>
    <ligand>
        <name>Mg(2+)</name>
        <dbReference type="ChEBI" id="CHEBI:18420"/>
        <label>3</label>
    </ligand>
</feature>
<feature type="binding site" evidence="1">
    <location>
        <position position="27"/>
    </location>
    <ligand>
        <name>Mg(2+)</name>
        <dbReference type="ChEBI" id="CHEBI:18420"/>
        <label>4</label>
    </ligand>
</feature>
<feature type="binding site" evidence="1">
    <location>
        <position position="44"/>
    </location>
    <ligand>
        <name>Mg(2+)</name>
        <dbReference type="ChEBI" id="CHEBI:18420"/>
        <label>1</label>
    </ligand>
</feature>
<feature type="binding site" evidence="1">
    <location>
        <position position="44"/>
    </location>
    <ligand>
        <name>Mg(2+)</name>
        <dbReference type="ChEBI" id="CHEBI:18420"/>
        <label>2</label>
    </ligand>
</feature>
<feature type="binding site" evidence="1">
    <location>
        <position position="51"/>
    </location>
    <ligand>
        <name>substrate</name>
    </ligand>
</feature>
<feature type="binding site" evidence="1">
    <location>
        <position position="73"/>
    </location>
    <ligand>
        <name>Mg(2+)</name>
        <dbReference type="ChEBI" id="CHEBI:18420"/>
        <label>2</label>
    </ligand>
</feature>
<feature type="binding site" evidence="1">
    <location>
        <position position="73"/>
    </location>
    <ligand>
        <name>Mg(2+)</name>
        <dbReference type="ChEBI" id="CHEBI:18420"/>
        <label>3</label>
    </ligand>
</feature>
<feature type="binding site" evidence="1">
    <location>
        <position position="73"/>
    </location>
    <ligand>
        <name>Mg(2+)</name>
        <dbReference type="ChEBI" id="CHEBI:18420"/>
        <label>4</label>
    </ligand>
</feature>
<feature type="binding site" evidence="1">
    <location>
        <position position="103"/>
    </location>
    <ligand>
        <name>ATP</name>
        <dbReference type="ChEBI" id="CHEBI:30616"/>
    </ligand>
</feature>
<feature type="binding site" evidence="1">
    <location>
        <begin position="120"/>
        <end position="121"/>
    </location>
    <ligand>
        <name>ATP</name>
        <dbReference type="ChEBI" id="CHEBI:30616"/>
    </ligand>
</feature>
<feature type="binding site" evidence="1">
    <location>
        <position position="121"/>
    </location>
    <ligand>
        <name>Mg(2+)</name>
        <dbReference type="ChEBI" id="CHEBI:18420"/>
        <label>1</label>
    </ligand>
</feature>
<feature type="binding site" evidence="1">
    <location>
        <position position="147"/>
    </location>
    <ligand>
        <name>ATP</name>
        <dbReference type="ChEBI" id="CHEBI:30616"/>
    </ligand>
</feature>
<feature type="binding site" evidence="1">
    <location>
        <position position="215"/>
    </location>
    <ligand>
        <name>Mg(2+)</name>
        <dbReference type="ChEBI" id="CHEBI:18420"/>
        <label>3</label>
    </ligand>
</feature>
<feature type="binding site" evidence="1">
    <location>
        <position position="217"/>
    </location>
    <ligand>
        <name>ATP</name>
        <dbReference type="ChEBI" id="CHEBI:30616"/>
    </ligand>
</feature>
<feature type="binding site" evidence="1">
    <location>
        <position position="218"/>
    </location>
    <ligand>
        <name>Mg(2+)</name>
        <dbReference type="ChEBI" id="CHEBI:18420"/>
        <label>5</label>
    </ligand>
</feature>
<feature type="binding site" evidence="1">
    <location>
        <position position="264"/>
    </location>
    <ligand>
        <name>substrate</name>
    </ligand>
</feature>
<feature type="binding site" evidence="1">
    <location>
        <position position="321"/>
    </location>
    <ligand>
        <name>substrate</name>
    </ligand>
</feature>
<keyword id="KW-0067">ATP-binding</keyword>
<keyword id="KW-0418">Kinase</keyword>
<keyword id="KW-0460">Magnesium</keyword>
<keyword id="KW-0479">Metal-binding</keyword>
<keyword id="KW-0547">Nucleotide-binding</keyword>
<keyword id="KW-1185">Reference proteome</keyword>
<keyword id="KW-0784">Thiamine biosynthesis</keyword>
<keyword id="KW-0808">Transferase</keyword>
<protein>
    <recommendedName>
        <fullName evidence="1">Thiamine-monophosphate kinase</fullName>
        <shortName evidence="1">TMP kinase</shortName>
        <shortName evidence="1">Thiamine-phosphate kinase</shortName>
        <ecNumber evidence="1">2.7.4.16</ecNumber>
    </recommendedName>
</protein>
<sequence>MDEFDLIHSITPRTIHHSSVDVGIGDDAALYTAKHGVQEIVCVDTMVEDVHFKLHYSSPEDIGYKALAVNISDIAAMGGIPKFYLVSLAVPSKWTESEIKAMYEGMNELAKLYHMDLIGGDTVSTADKLVVTVTVIGEIEKGQACLRSLAKPNDIVFVTGEIGSSAAGLSLLLEETNPQNSSVETDYFIHRHKRPEPRVSVGRLCSIFKRAALNDVSDGLASELNEIAEASCVSIEIVESMLPIHSDLPKLHPNWKEWALFGGEDFELTGTVSNEEWEVLKQECAALHLPITKIGYVREKTKSKVILKTDQTSMILEKKGYNHFK</sequence>
<comment type="function">
    <text evidence="1">Catalyzes the ATP-dependent phosphorylation of thiamine-monophosphate (TMP) to form thiamine-pyrophosphate (TPP), the active form of vitamin B1.</text>
</comment>
<comment type="catalytic activity">
    <reaction evidence="1">
        <text>thiamine phosphate + ATP = thiamine diphosphate + ADP</text>
        <dbReference type="Rhea" id="RHEA:15913"/>
        <dbReference type="ChEBI" id="CHEBI:30616"/>
        <dbReference type="ChEBI" id="CHEBI:37575"/>
        <dbReference type="ChEBI" id="CHEBI:58937"/>
        <dbReference type="ChEBI" id="CHEBI:456216"/>
        <dbReference type="EC" id="2.7.4.16"/>
    </reaction>
</comment>
<comment type="pathway">
    <text evidence="1">Cofactor biosynthesis; thiamine diphosphate biosynthesis; thiamine diphosphate from thiamine phosphate: step 1/1.</text>
</comment>
<comment type="miscellaneous">
    <text evidence="1">Reaction mechanism of ThiL seems to utilize a direct, inline transfer of the gamma-phosphate of ATP to TMP rather than a phosphorylated enzyme intermediate.</text>
</comment>
<comment type="similarity">
    <text evidence="1">Belongs to the thiamine-monophosphate kinase family.</text>
</comment>
<comment type="sequence caution" evidence="2">
    <conflict type="frameshift">
        <sequence resource="EMBL-CDS" id="AAA72334"/>
    </conflict>
</comment>
<comment type="sequence caution" evidence="2">
    <conflict type="erroneous initiation">
        <sequence resource="EMBL-CDS" id="BAA19714"/>
    </conflict>
</comment>
<accession>O05514</accession>
<accession>Q05875</accession>
<name>THIL_BACSU</name>
<gene>
    <name evidence="1" type="primary">thiL</name>
    <name type="synonym">ydiA</name>
    <name type="synonym">ydxA</name>
    <name type="ordered locus">BSU05900</name>
</gene>
<organism>
    <name type="scientific">Bacillus subtilis (strain 168)</name>
    <dbReference type="NCBI Taxonomy" id="224308"/>
    <lineage>
        <taxon>Bacteria</taxon>
        <taxon>Bacillati</taxon>
        <taxon>Bacillota</taxon>
        <taxon>Bacilli</taxon>
        <taxon>Bacillales</taxon>
        <taxon>Bacillaceae</taxon>
        <taxon>Bacillus</taxon>
    </lineage>
</organism>
<dbReference type="EC" id="2.7.4.16" evidence="1"/>
<dbReference type="EMBL" id="D88802">
    <property type="protein sequence ID" value="BAA19714.1"/>
    <property type="status" value="ALT_INIT"/>
    <property type="molecule type" value="Genomic_DNA"/>
</dbReference>
<dbReference type="EMBL" id="AL009126">
    <property type="protein sequence ID" value="CAB12409.1"/>
    <property type="molecule type" value="Genomic_DNA"/>
</dbReference>
<dbReference type="EMBL" id="L08236">
    <property type="protein sequence ID" value="AAA72334.1"/>
    <property type="status" value="ALT_FRAME"/>
    <property type="molecule type" value="Genomic_DNA"/>
</dbReference>
<dbReference type="PIR" id="B69786">
    <property type="entry name" value="B69786"/>
</dbReference>
<dbReference type="RefSeq" id="NP_388471.1">
    <property type="nucleotide sequence ID" value="NC_000964.3"/>
</dbReference>
<dbReference type="RefSeq" id="WP_003234080.1">
    <property type="nucleotide sequence ID" value="NZ_OZ025638.1"/>
</dbReference>
<dbReference type="SMR" id="O05514"/>
<dbReference type="FunCoup" id="O05514">
    <property type="interactions" value="703"/>
</dbReference>
<dbReference type="STRING" id="224308.BSU05900"/>
<dbReference type="PaxDb" id="224308-BSU05900"/>
<dbReference type="DNASU" id="939867"/>
<dbReference type="EnsemblBacteria" id="CAB12409">
    <property type="protein sequence ID" value="CAB12409"/>
    <property type="gene ID" value="BSU_05900"/>
</dbReference>
<dbReference type="GeneID" id="939867"/>
<dbReference type="KEGG" id="bsu:BSU05900"/>
<dbReference type="PATRIC" id="fig|224308.179.peg.635"/>
<dbReference type="eggNOG" id="COG0611">
    <property type="taxonomic scope" value="Bacteria"/>
</dbReference>
<dbReference type="InParanoid" id="O05514"/>
<dbReference type="OrthoDB" id="9802811at2"/>
<dbReference type="PhylomeDB" id="O05514"/>
<dbReference type="BioCyc" id="BSUB:BSU05900-MONOMER"/>
<dbReference type="BioCyc" id="MetaCyc:BSU05900-MONOMER"/>
<dbReference type="UniPathway" id="UPA00060">
    <property type="reaction ID" value="UER00142"/>
</dbReference>
<dbReference type="Proteomes" id="UP000001570">
    <property type="component" value="Chromosome"/>
</dbReference>
<dbReference type="GO" id="GO:0005524">
    <property type="term" value="F:ATP binding"/>
    <property type="evidence" value="ECO:0007669"/>
    <property type="project" value="UniProtKB-UniRule"/>
</dbReference>
<dbReference type="GO" id="GO:0000287">
    <property type="term" value="F:magnesium ion binding"/>
    <property type="evidence" value="ECO:0007669"/>
    <property type="project" value="UniProtKB-UniRule"/>
</dbReference>
<dbReference type="GO" id="GO:0009030">
    <property type="term" value="F:thiamine-phosphate kinase activity"/>
    <property type="evidence" value="ECO:0000318"/>
    <property type="project" value="GO_Central"/>
</dbReference>
<dbReference type="GO" id="GO:0009228">
    <property type="term" value="P:thiamine biosynthetic process"/>
    <property type="evidence" value="ECO:0000318"/>
    <property type="project" value="GO_Central"/>
</dbReference>
<dbReference type="GO" id="GO:0009229">
    <property type="term" value="P:thiamine diphosphate biosynthetic process"/>
    <property type="evidence" value="ECO:0000318"/>
    <property type="project" value="GO_Central"/>
</dbReference>
<dbReference type="CDD" id="cd02194">
    <property type="entry name" value="ThiL"/>
    <property type="match status" value="1"/>
</dbReference>
<dbReference type="Gene3D" id="3.90.650.10">
    <property type="entry name" value="PurM-like C-terminal domain"/>
    <property type="match status" value="1"/>
</dbReference>
<dbReference type="Gene3D" id="3.30.1330.10">
    <property type="entry name" value="PurM-like, N-terminal domain"/>
    <property type="match status" value="1"/>
</dbReference>
<dbReference type="HAMAP" id="MF_02128">
    <property type="entry name" value="TMP_kinase"/>
    <property type="match status" value="1"/>
</dbReference>
<dbReference type="InterPro" id="IPR010918">
    <property type="entry name" value="PurM-like_C_dom"/>
</dbReference>
<dbReference type="InterPro" id="IPR036676">
    <property type="entry name" value="PurM-like_C_sf"/>
</dbReference>
<dbReference type="InterPro" id="IPR016188">
    <property type="entry name" value="PurM-like_N"/>
</dbReference>
<dbReference type="InterPro" id="IPR036921">
    <property type="entry name" value="PurM-like_N_sf"/>
</dbReference>
<dbReference type="InterPro" id="IPR006283">
    <property type="entry name" value="ThiL-like"/>
</dbReference>
<dbReference type="NCBIfam" id="TIGR01379">
    <property type="entry name" value="thiL"/>
    <property type="match status" value="1"/>
</dbReference>
<dbReference type="PANTHER" id="PTHR30270">
    <property type="entry name" value="THIAMINE-MONOPHOSPHATE KINASE"/>
    <property type="match status" value="1"/>
</dbReference>
<dbReference type="PANTHER" id="PTHR30270:SF0">
    <property type="entry name" value="THIAMINE-MONOPHOSPHATE KINASE"/>
    <property type="match status" value="1"/>
</dbReference>
<dbReference type="Pfam" id="PF00586">
    <property type="entry name" value="AIRS"/>
    <property type="match status" value="1"/>
</dbReference>
<dbReference type="Pfam" id="PF02769">
    <property type="entry name" value="AIRS_C"/>
    <property type="match status" value="1"/>
</dbReference>
<dbReference type="PIRSF" id="PIRSF005303">
    <property type="entry name" value="Thiam_monoph_kin"/>
    <property type="match status" value="1"/>
</dbReference>
<dbReference type="SUPFAM" id="SSF56042">
    <property type="entry name" value="PurM C-terminal domain-like"/>
    <property type="match status" value="1"/>
</dbReference>
<dbReference type="SUPFAM" id="SSF55326">
    <property type="entry name" value="PurM N-terminal domain-like"/>
    <property type="match status" value="1"/>
</dbReference>
<proteinExistence type="inferred from homology"/>